<proteinExistence type="inferred from homology"/>
<feature type="chain" id="PRO_1000088234" description="Segregation and condensation protein A">
    <location>
        <begin position="1"/>
        <end position="243"/>
    </location>
</feature>
<reference key="1">
    <citation type="submission" date="2007-06" db="EMBL/GenBank/DDBJ databases">
        <title>Complete sequence of chromosome of Staphylococcus aureus subsp. aureus JH1.</title>
        <authorList>
            <consortium name="US DOE Joint Genome Institute"/>
            <person name="Copeland A."/>
            <person name="Lucas S."/>
            <person name="Lapidus A."/>
            <person name="Barry K."/>
            <person name="Detter J.C."/>
            <person name="Glavina del Rio T."/>
            <person name="Hammon N."/>
            <person name="Israni S."/>
            <person name="Dalin E."/>
            <person name="Tice H."/>
            <person name="Pitluck S."/>
            <person name="Chain P."/>
            <person name="Malfatti S."/>
            <person name="Shin M."/>
            <person name="Vergez L."/>
            <person name="Schmutz J."/>
            <person name="Larimer F."/>
            <person name="Land M."/>
            <person name="Hauser L."/>
            <person name="Kyrpides N."/>
            <person name="Ivanova N."/>
            <person name="Tomasz A."/>
            <person name="Richardson P."/>
        </authorList>
    </citation>
    <scope>NUCLEOTIDE SEQUENCE [LARGE SCALE GENOMIC DNA]</scope>
    <source>
        <strain>JH1</strain>
    </source>
</reference>
<organism>
    <name type="scientific">Staphylococcus aureus (strain JH1)</name>
    <dbReference type="NCBI Taxonomy" id="359787"/>
    <lineage>
        <taxon>Bacteria</taxon>
        <taxon>Bacillati</taxon>
        <taxon>Bacillota</taxon>
        <taxon>Bacilli</taxon>
        <taxon>Bacillales</taxon>
        <taxon>Staphylococcaceae</taxon>
        <taxon>Staphylococcus</taxon>
    </lineage>
</organism>
<comment type="function">
    <text evidence="1">Participates in chromosomal partition during cell division. May act via the formation of a condensin-like complex containing Smc and ScpB that pull DNA away from mid-cell into both cell halves.</text>
</comment>
<comment type="subunit">
    <text evidence="1">Component of a cohesin-like complex composed of ScpA, ScpB and the Smc homodimer, in which ScpA and ScpB bind to the head domain of Smc. The presence of the three proteins is required for the association of the complex with DNA.</text>
</comment>
<comment type="subcellular location">
    <subcellularLocation>
        <location evidence="1">Cytoplasm</location>
    </subcellularLocation>
    <text evidence="1">Associated with two foci at the outer edges of the nucleoid region in young cells, and at four foci within both cell halves in older cells.</text>
</comment>
<comment type="similarity">
    <text evidence="1">Belongs to the ScpA family.</text>
</comment>
<keyword id="KW-0131">Cell cycle</keyword>
<keyword id="KW-0132">Cell division</keyword>
<keyword id="KW-0159">Chromosome partition</keyword>
<keyword id="KW-0963">Cytoplasm</keyword>
<protein>
    <recommendedName>
        <fullName evidence="1">Segregation and condensation protein A</fullName>
    </recommendedName>
</protein>
<accession>A6U1W4</accession>
<gene>
    <name evidence="1" type="primary">scpA</name>
    <name type="ordered locus">SaurJH1_1583</name>
</gene>
<name>SCPA_STAA2</name>
<dbReference type="EMBL" id="CP000736">
    <property type="protein sequence ID" value="ABR52432.1"/>
    <property type="molecule type" value="Genomic_DNA"/>
</dbReference>
<dbReference type="SMR" id="A6U1W4"/>
<dbReference type="KEGG" id="sah:SaurJH1_1583"/>
<dbReference type="HOGENOM" id="CLU_038686_3_1_9"/>
<dbReference type="GO" id="GO:0005737">
    <property type="term" value="C:cytoplasm"/>
    <property type="evidence" value="ECO:0007669"/>
    <property type="project" value="UniProtKB-SubCell"/>
</dbReference>
<dbReference type="GO" id="GO:0051301">
    <property type="term" value="P:cell division"/>
    <property type="evidence" value="ECO:0007669"/>
    <property type="project" value="UniProtKB-KW"/>
</dbReference>
<dbReference type="GO" id="GO:0007059">
    <property type="term" value="P:chromosome segregation"/>
    <property type="evidence" value="ECO:0007669"/>
    <property type="project" value="UniProtKB-UniRule"/>
</dbReference>
<dbReference type="GO" id="GO:0006260">
    <property type="term" value="P:DNA replication"/>
    <property type="evidence" value="ECO:0007669"/>
    <property type="project" value="UniProtKB-UniRule"/>
</dbReference>
<dbReference type="Gene3D" id="6.10.250.2410">
    <property type="match status" value="1"/>
</dbReference>
<dbReference type="Gene3D" id="1.10.10.580">
    <property type="entry name" value="Structural maintenance of chromosome 1. Chain E"/>
    <property type="match status" value="1"/>
</dbReference>
<dbReference type="HAMAP" id="MF_01805">
    <property type="entry name" value="ScpA"/>
    <property type="match status" value="1"/>
</dbReference>
<dbReference type="InterPro" id="IPR003768">
    <property type="entry name" value="ScpA"/>
</dbReference>
<dbReference type="InterPro" id="IPR023093">
    <property type="entry name" value="ScpA-like_C"/>
</dbReference>
<dbReference type="PANTHER" id="PTHR33969">
    <property type="entry name" value="SEGREGATION AND CONDENSATION PROTEIN A"/>
    <property type="match status" value="1"/>
</dbReference>
<dbReference type="PANTHER" id="PTHR33969:SF2">
    <property type="entry name" value="SEGREGATION AND CONDENSATION PROTEIN A"/>
    <property type="match status" value="1"/>
</dbReference>
<dbReference type="Pfam" id="PF02616">
    <property type="entry name" value="SMC_ScpA"/>
    <property type="match status" value="1"/>
</dbReference>
<sequence length="243" mass="28671">MYEVKLDAFNGPLDLLLHLIQKFEIDIYDIPMQALTEQYMQYVHAMKQLEINIASEYLVLASELLMIKSKMLLPQSTSDMDVDDDPREDLVGRLIEYQNYKEYTAILNDMKEERDFYFTKRPTDLSHLETDESWDPNHTIDLTELIVAYQRVKNRVELNTPKSVEIRKETFTIQQATEQVTSRLKDKDHFNFFSLFTFSEPIEQVVTHFLAILEMSKAGIINIEQQRNFEDINIIRGVNYHFG</sequence>
<evidence type="ECO:0000255" key="1">
    <source>
        <dbReference type="HAMAP-Rule" id="MF_01805"/>
    </source>
</evidence>